<keyword id="KW-0002">3D-structure</keyword>
<keyword id="KW-0156">Chromatin regulator</keyword>
<keyword id="KW-0963">Cytoplasm</keyword>
<keyword id="KW-0479">Metal-binding</keyword>
<keyword id="KW-0539">Nucleus</keyword>
<keyword id="KW-0656">Proto-oncogene</keyword>
<keyword id="KW-1185">Reference proteome</keyword>
<keyword id="KW-0678">Repressor</keyword>
<keyword id="KW-0804">Transcription</keyword>
<keyword id="KW-0805">Transcription regulation</keyword>
<keyword id="KW-0832">Ubl conjugation</keyword>
<keyword id="KW-0862">Zinc</keyword>
<keyword id="KW-0863">Zinc-finger</keyword>
<organism>
    <name type="scientific">Mus musculus</name>
    <name type="common">Mouse</name>
    <dbReference type="NCBI Taxonomy" id="10090"/>
    <lineage>
        <taxon>Eukaryota</taxon>
        <taxon>Metazoa</taxon>
        <taxon>Chordata</taxon>
        <taxon>Craniata</taxon>
        <taxon>Vertebrata</taxon>
        <taxon>Euteleostomi</taxon>
        <taxon>Mammalia</taxon>
        <taxon>Eutheria</taxon>
        <taxon>Euarchontoglires</taxon>
        <taxon>Glires</taxon>
        <taxon>Rodentia</taxon>
        <taxon>Myomorpha</taxon>
        <taxon>Muroidea</taxon>
        <taxon>Muridae</taxon>
        <taxon>Murinae</taxon>
        <taxon>Mus</taxon>
        <taxon>Mus</taxon>
    </lineage>
</organism>
<gene>
    <name type="primary">Bmi1</name>
    <name type="synonym">Bmi-1</name>
    <name type="synonym">Pcgf4</name>
</gene>
<name>BMI1_MOUSE</name>
<feature type="chain" id="PRO_0000055988" description="Polycomb complex protein BMI-1">
    <location>
        <begin position="1"/>
        <end position="324"/>
    </location>
</feature>
<feature type="zinc finger region" description="RING-type" evidence="4">
    <location>
        <begin position="18"/>
        <end position="57"/>
    </location>
</feature>
<feature type="region of interest" description="Interaction with PHC2" evidence="2">
    <location>
        <begin position="160"/>
        <end position="180"/>
    </location>
</feature>
<feature type="region of interest" description="Interaction with E4F1" evidence="2">
    <location>
        <begin position="162"/>
        <end position="226"/>
    </location>
</feature>
<feature type="region of interest" description="Disordered" evidence="5">
    <location>
        <begin position="232"/>
        <end position="324"/>
    </location>
</feature>
<feature type="short sequence motif" description="Nuclear localization signal" evidence="3">
    <location>
        <begin position="81"/>
        <end position="95"/>
    </location>
</feature>
<feature type="compositionally biased region" description="Low complexity" evidence="5">
    <location>
        <begin position="264"/>
        <end position="276"/>
    </location>
</feature>
<feature type="compositionally biased region" description="Polar residues" evidence="5">
    <location>
        <begin position="277"/>
        <end position="307"/>
    </location>
</feature>
<feature type="compositionally biased region" description="Low complexity" evidence="5">
    <location>
        <begin position="313"/>
        <end position="324"/>
    </location>
</feature>
<feature type="helix" evidence="10">
    <location>
        <begin position="9"/>
        <end position="12"/>
    </location>
</feature>
<feature type="helix" evidence="10">
    <location>
        <begin position="13"/>
        <end position="15"/>
    </location>
</feature>
<feature type="turn" evidence="10">
    <location>
        <begin position="19"/>
        <end position="21"/>
    </location>
</feature>
<feature type="strand" evidence="10">
    <location>
        <begin position="22"/>
        <end position="24"/>
    </location>
</feature>
<feature type="strand" evidence="10">
    <location>
        <begin position="26"/>
        <end position="31"/>
    </location>
</feature>
<feature type="turn" evidence="10">
    <location>
        <begin position="32"/>
        <end position="34"/>
    </location>
</feature>
<feature type="strand" evidence="10">
    <location>
        <begin position="37"/>
        <end position="39"/>
    </location>
</feature>
<feature type="helix" evidence="10">
    <location>
        <begin position="40"/>
        <end position="47"/>
    </location>
</feature>
<feature type="turn" evidence="10">
    <location>
        <begin position="54"/>
        <end position="56"/>
    </location>
</feature>
<feature type="helix" evidence="10">
    <location>
        <begin position="65"/>
        <end position="68"/>
    </location>
</feature>
<feature type="strand" evidence="10">
    <location>
        <begin position="69"/>
        <end position="71"/>
    </location>
</feature>
<feature type="helix" evidence="10">
    <location>
        <begin position="73"/>
        <end position="82"/>
    </location>
</feature>
<feature type="helix" evidence="10">
    <location>
        <begin position="86"/>
        <end position="100"/>
    </location>
</feature>
<comment type="function">
    <text evidence="2 7">Component of a Polycomb group (PcG) multiprotein PRC1-like complex, a complex class required to maintain the transcriptionally repressive state of many genes, including Hox genes, throughout development. PcG PRC1 complex acts via chromatin remodeling and modification of histones; it mediates monoubiquitination of histone H2A 'Lys-119', rendering chromatin heritably changed in its expressibility. The complex composed of RNF2, UB2D3 and BMI1 binds nucleosomes, and has activity only with nucleosomal histone H2A. In the PRC1-like complex, regulates the E3 ubiquitin-protein ligase activity of RNF2/RING2 (By similarity).</text>
</comment>
<comment type="subunit">
    <text evidence="2 6 7 8">Component of a PRC1-like complex (PubMed:16359901). Identified in a PRC1-like HPRC-H complex with CBX2, CBX4, CBX8, PHC1, PHC2, PHC3, RING1 and RNF2 (By similarity). Interacts with RNF2/RING2 (PubMed:16359901, PubMed:16710298). Interacts with RING1 (PubMed:16359901, PubMed:16710298). Part of a complex that contains RNF2, UB2D3 and BMI1, where RNF2 and BMI1 form a tight heterodimer, and UB2D3 interacts only with RNF2. The complex composed of RNF2, UB2D3 and BMI1 binds nucleosomes, and has activity only with nucleosomal histone H2A. Interacts with CBX7 and CBX8 (PubMed:16359901). Interacts with SPOP. Part of a complex consisting of BMI1, CUL3 and SPOP. Interacts with E4F1 (By similarity). Interacts with PHC2 (PubMed:16359901). Interacts with zinc finger protein ZNF277 (PubMed:20808772). May be part of a complex including at least ZNF277, BMI1 and RNF2/RING2 (PubMed:20808772).</text>
</comment>
<comment type="interaction">
    <interactant intactId="EBI-927401">
        <id>P25916</id>
    </interactant>
    <interactant intactId="EBI-1216641">
        <id>Q9QXV1</id>
        <label>Cbx8</label>
    </interactant>
    <organismsDiffer>false</organismsDiffer>
    <experiments>3</experiments>
</comment>
<comment type="interaction">
    <interactant intactId="EBI-927401">
        <id>P25916</id>
    </interactant>
    <interactant intactId="EBI-7987547">
        <id>O88509</id>
        <label>Dnmt3b</label>
    </interactant>
    <organismsDiffer>false</organismsDiffer>
    <experiments>2</experiments>
</comment>
<comment type="interaction">
    <interactant intactId="EBI-927401">
        <id>P25916</id>
    </interactant>
    <interactant intactId="EBI-3043887">
        <id>Q60848</id>
        <label>Hells</label>
    </interactant>
    <organismsDiffer>false</organismsDiffer>
    <experiments>2</experiments>
</comment>
<comment type="interaction">
    <interactant intactId="EBI-927401">
        <id>P25916</id>
    </interactant>
    <interactant intactId="EBI-642357">
        <id>Q9QWH1</id>
        <label>Phc2</label>
    </interactant>
    <organismsDiffer>false</organismsDiffer>
    <experiments>3</experiments>
</comment>
<comment type="interaction">
    <interactant intactId="EBI-927401">
        <id>P25916</id>
    </interactant>
    <interactant intactId="EBI-929310">
        <id>O35730</id>
        <label>Ring1</label>
    </interactant>
    <organismsDiffer>false</organismsDiffer>
    <experiments>4</experiments>
</comment>
<comment type="interaction">
    <interactant intactId="EBI-927401">
        <id>P25916</id>
    </interactant>
    <interactant intactId="EBI-927321">
        <id>Q9CQJ4</id>
        <label>Rnf2</label>
    </interactant>
    <organismsDiffer>false</organismsDiffer>
    <experiments>17</experiments>
</comment>
<comment type="interaction">
    <interactant intactId="EBI-927401">
        <id>P25916</id>
    </interactant>
    <interactant intactId="EBI-713786">
        <id>Q8IXK0</id>
        <label>PHC2</label>
    </interactant>
    <organismsDiffer>true</organismsDiffer>
    <experiments>2</experiments>
</comment>
<comment type="subcellular location">
    <subcellularLocation>
        <location evidence="2">Nucleus</location>
    </subcellularLocation>
    <subcellularLocation>
        <location evidence="2">Cytoplasm</location>
    </subcellularLocation>
</comment>
<comment type="tissue specificity">
    <text>Detected in most organs with high expression levels in thymus, heart, brain and testis.</text>
</comment>
<comment type="induction">
    <text evidence="8">Down-regulated by oxidative stress.</text>
</comment>
<comment type="PTM">
    <text evidence="1 7">May be polyubiquitinated; which does not lead to proteasomal degradation (By similarity). Monoubiquitinated.</text>
</comment>
<accession>P25916</accession>
<sequence length="324" mass="36708">MHRTTRIKITELNPHLMCVLCGGYFIDATTIIECLHSFCKTCIVRYLETSKYCPICDVQVHKTRPLLNIRSDKTLQDIVYKLVPGLFKNEMKRRRDFYAAHPSADAANGSNEDRGEVADEEKRIITDDEIISLSIEFFDQSRLDRKVNKEKPKEEVNDKRYLRCPAAMTVMHLRKFLRSKMDIPNTFQIDVMYEEEPLKDYYTLMDIAYIYTWRRNGPLPLKYRVRPTCKRMKMSHQRDGLTNAGELESDSGSDKANSPAGGVPSTSSCLPSPSTPVQSPHPQFPHISSTMNGTSNSPSANHQSSFASRPRKSSLNGSSATSSG</sequence>
<reference key="1">
    <citation type="journal article" date="1991" name="Cell">
        <title>Novel zinc finger gene implicated as myc collaborator by retrovirally accelerated lymphomagenesis in E mu-myc transgenic mice.</title>
        <authorList>
            <person name="Haupt Y."/>
            <person name="Alexander W.S."/>
            <person name="Barri G."/>
            <person name="Klinken S.P."/>
            <person name="Adams J.M."/>
        </authorList>
    </citation>
    <scope>NUCLEOTIDE SEQUENCE [GENOMIC DNA]</scope>
</reference>
<reference key="2">
    <citation type="journal article" date="1991" name="Cell">
        <title>Identification of cooperating oncogenes in E mu-myc transgenic mice by provirus tagging.</title>
        <authorList>
            <person name="van Lohuiizen M."/>
            <person name="Verbbeek S."/>
            <person name="Scheijen B."/>
            <person name="Wientjens E."/>
            <person name="Gulden H."/>
            <person name="Berns A."/>
        </authorList>
    </citation>
    <scope>NUCLEOTIDE SEQUENCE [MRNA]</scope>
</reference>
<reference key="3">
    <citation type="journal article" date="2004" name="Genome Res.">
        <title>The status, quality, and expansion of the NIH full-length cDNA project: the Mammalian Gene Collection (MGC).</title>
        <authorList>
            <consortium name="The MGC Project Team"/>
        </authorList>
    </citation>
    <scope>NUCLEOTIDE SEQUENCE [LARGE SCALE MRNA]</scope>
    <source>
        <strain>C57BL/6J</strain>
        <tissue>Brain</tissue>
        <tissue>Hematopoietic</tissue>
    </source>
</reference>
<reference key="4">
    <citation type="journal article" date="2005" name="Mol. Cell">
        <title>Role of Bmi-1 and Ring1A in H2A ubiquitylation and Hox gene silencing.</title>
        <authorList>
            <person name="Cao R."/>
            <person name="Tsukada Y."/>
            <person name="Zhang Y."/>
        </authorList>
    </citation>
    <scope>RECONSTITUTION OF A PRC1-LIKE COMPLEX</scope>
    <scope>INTERACTION WITH RING1; RNF2; CBX8 AND PHC2</scope>
</reference>
<reference key="5">
    <citation type="journal article" date="2006" name="EMBO J.">
        <title>Structure and E3-ligase activity of the Ring-Ring complex of polycomb proteins Bmi1 and Ring1b.</title>
        <authorList>
            <person name="Buchwald G."/>
            <person name="van der Stoop P."/>
            <person name="Weichenrieder O."/>
            <person name="Perrakis A."/>
            <person name="van Lohuizen M."/>
            <person name="Sixma T.K."/>
        </authorList>
    </citation>
    <scope>X-RAY CRYSTALLOGRAPHY (2.0 ANGSTROMS) OF 1-108 IN COMPLEX WITH RNF2 AND ZINC IONS</scope>
    <scope>FUNCTION</scope>
    <scope>INTERACTION WITH RING1</scope>
    <scope>MONOUBIQUITINATION</scope>
    <scope>POLYUBIQUITINATION IN THE PRESENCE OF UBE2D3 AND RING2</scope>
    <scope>SUBUNIT</scope>
</reference>
<reference evidence="9" key="6">
    <citation type="journal article" date="2010" name="PLoS ONE">
        <title>A novel zinc finger protein Zfp277 mediates transcriptional repression of the Ink4a/arf locus through polycomb repressive complex 1.</title>
        <authorList>
            <person name="Negishi M."/>
            <person name="Saraya A."/>
            <person name="Mochizuki S."/>
            <person name="Helin K."/>
            <person name="Koseki H."/>
            <person name="Iwama A."/>
        </authorList>
    </citation>
    <scope>INTERACTION WITH ZNF277</scope>
    <scope>INDUCTION</scope>
</reference>
<proteinExistence type="evidence at protein level"/>
<dbReference type="EMBL" id="M64067">
    <property type="protein sequence ID" value="AAA37299.1"/>
    <property type="molecule type" value="Genomic_DNA"/>
</dbReference>
<dbReference type="EMBL" id="M64068">
    <property type="protein sequence ID" value="AAA37301.1"/>
    <property type="status" value="ALT_SEQ"/>
    <property type="molecule type" value="Genomic_DNA"/>
</dbReference>
<dbReference type="EMBL" id="M64279">
    <property type="protein sequence ID" value="AAA37300.1"/>
    <property type="molecule type" value="mRNA"/>
</dbReference>
<dbReference type="EMBL" id="BC053708">
    <property type="protein sequence ID" value="AAH53708.1"/>
    <property type="molecule type" value="mRNA"/>
</dbReference>
<dbReference type="EMBL" id="BC056384">
    <property type="protein sequence ID" value="AAH56384.1"/>
    <property type="molecule type" value="mRNA"/>
</dbReference>
<dbReference type="CCDS" id="CCDS15711.1"/>
<dbReference type="PIR" id="A39523">
    <property type="entry name" value="A39523"/>
</dbReference>
<dbReference type="RefSeq" id="NP_001403840.1">
    <property type="nucleotide sequence ID" value="NM_001416911.1"/>
</dbReference>
<dbReference type="RefSeq" id="NP_001403841.1">
    <property type="nucleotide sequence ID" value="NM_001416912.1"/>
</dbReference>
<dbReference type="RefSeq" id="NP_001403842.1">
    <property type="nucleotide sequence ID" value="NM_001416913.1"/>
</dbReference>
<dbReference type="RefSeq" id="NP_001403843.1">
    <property type="nucleotide sequence ID" value="NM_001416914.1"/>
</dbReference>
<dbReference type="RefSeq" id="NP_031578.2">
    <property type="nucleotide sequence ID" value="NM_007552.4"/>
</dbReference>
<dbReference type="RefSeq" id="XP_006497374.1">
    <property type="nucleotide sequence ID" value="XM_006497311.2"/>
</dbReference>
<dbReference type="RefSeq" id="XP_006497375.1">
    <property type="nucleotide sequence ID" value="XM_006497312.3"/>
</dbReference>
<dbReference type="PDB" id="2CKL">
    <property type="method" value="X-ray"/>
    <property type="resolution" value="2.00 A"/>
    <property type="chains" value="A=1-108"/>
</dbReference>
<dbReference type="PDBsum" id="2CKL"/>
<dbReference type="SMR" id="P25916"/>
<dbReference type="BioGRID" id="198359">
    <property type="interactions" value="30"/>
</dbReference>
<dbReference type="CORUM" id="P25916"/>
<dbReference type="DIP" id="DIP-132N"/>
<dbReference type="FunCoup" id="P25916">
    <property type="interactions" value="2737"/>
</dbReference>
<dbReference type="IntAct" id="P25916">
    <property type="interactions" value="21"/>
</dbReference>
<dbReference type="MINT" id="P25916"/>
<dbReference type="STRING" id="10090.ENSMUSP00000028071"/>
<dbReference type="iPTMnet" id="P25916"/>
<dbReference type="PhosphoSitePlus" id="P25916"/>
<dbReference type="PaxDb" id="10090-ENSMUSP00000028071"/>
<dbReference type="PeptideAtlas" id="P25916"/>
<dbReference type="ProteomicsDB" id="273502"/>
<dbReference type="Pumba" id="P25916"/>
<dbReference type="DNASU" id="12151"/>
<dbReference type="Ensembl" id="ENSMUST00000028071.13">
    <property type="protein sequence ID" value="ENSMUSP00000028071.7"/>
    <property type="gene ID" value="ENSMUSG00000026739.14"/>
</dbReference>
<dbReference type="Ensembl" id="ENSMUST00000051929.13">
    <property type="protein sequence ID" value="ENSMUSP00000110300.2"/>
    <property type="gene ID" value="ENSMUSG00000026739.14"/>
</dbReference>
<dbReference type="GeneID" id="12151"/>
<dbReference type="KEGG" id="mmu:12151"/>
<dbReference type="UCSC" id="uc008ily.1">
    <property type="organism name" value="mouse"/>
</dbReference>
<dbReference type="AGR" id="MGI:88174"/>
<dbReference type="CTD" id="648"/>
<dbReference type="MGI" id="MGI:88174">
    <property type="gene designation" value="Bmi1"/>
</dbReference>
<dbReference type="VEuPathDB" id="HostDB:ENSMUSG00000026739"/>
<dbReference type="eggNOG" id="KOG2660">
    <property type="taxonomic scope" value="Eukaryota"/>
</dbReference>
<dbReference type="GeneTree" id="ENSGT00940000156042"/>
<dbReference type="HOGENOM" id="CLU_046427_0_0_1"/>
<dbReference type="InParanoid" id="P25916"/>
<dbReference type="OMA" id="QANDKRY"/>
<dbReference type="OrthoDB" id="1305878at2759"/>
<dbReference type="PhylomeDB" id="P25916"/>
<dbReference type="TreeFam" id="TF324206"/>
<dbReference type="Reactome" id="R-MMU-3108214">
    <property type="pathway name" value="SUMOylation of DNA damage response and repair proteins"/>
</dbReference>
<dbReference type="Reactome" id="R-MMU-3899300">
    <property type="pathway name" value="SUMOylation of transcription cofactors"/>
</dbReference>
<dbReference type="Reactome" id="R-MMU-4551638">
    <property type="pathway name" value="SUMOylation of chromatin organization proteins"/>
</dbReference>
<dbReference type="Reactome" id="R-MMU-4570464">
    <property type="pathway name" value="SUMOylation of RNA binding proteins"/>
</dbReference>
<dbReference type="Reactome" id="R-MMU-8939243">
    <property type="pathway name" value="RUNX1 interacts with co-factors whose precise effect on RUNX1 targets is not known"/>
</dbReference>
<dbReference type="Reactome" id="R-MMU-8953750">
    <property type="pathway name" value="Transcriptional Regulation by E2F6"/>
</dbReference>
<dbReference type="BioGRID-ORCS" id="12151">
    <property type="hits" value="4 hits in 82 CRISPR screens"/>
</dbReference>
<dbReference type="EvolutionaryTrace" id="P25916"/>
<dbReference type="PRO" id="PR:P25916"/>
<dbReference type="Proteomes" id="UP000000589">
    <property type="component" value="Chromosome 2"/>
</dbReference>
<dbReference type="RNAct" id="P25916">
    <property type="molecule type" value="protein"/>
</dbReference>
<dbReference type="Bgee" id="ENSMUSG00000026739">
    <property type="expression patterns" value="Expressed in animal zygote and 312 other cell types or tissues"/>
</dbReference>
<dbReference type="ExpressionAtlas" id="P25916">
    <property type="expression patterns" value="baseline and differential"/>
</dbReference>
<dbReference type="GO" id="GO:0005829">
    <property type="term" value="C:cytosol"/>
    <property type="evidence" value="ECO:0007669"/>
    <property type="project" value="Ensembl"/>
</dbReference>
<dbReference type="GO" id="GO:0000792">
    <property type="term" value="C:heterochromatin"/>
    <property type="evidence" value="ECO:0000314"/>
    <property type="project" value="MGI"/>
</dbReference>
<dbReference type="GO" id="GO:0016604">
    <property type="term" value="C:nuclear body"/>
    <property type="evidence" value="ECO:0000314"/>
    <property type="project" value="MGI"/>
</dbReference>
<dbReference type="GO" id="GO:0005634">
    <property type="term" value="C:nucleus"/>
    <property type="evidence" value="ECO:0000314"/>
    <property type="project" value="MGI"/>
</dbReference>
<dbReference type="GO" id="GO:0031519">
    <property type="term" value="C:PcG protein complex"/>
    <property type="evidence" value="ECO:0000314"/>
    <property type="project" value="MGI"/>
</dbReference>
<dbReference type="GO" id="GO:0035102">
    <property type="term" value="C:PRC1 complex"/>
    <property type="evidence" value="ECO:0000314"/>
    <property type="project" value="MGI"/>
</dbReference>
<dbReference type="GO" id="GO:0000151">
    <property type="term" value="C:ubiquitin ligase complex"/>
    <property type="evidence" value="ECO:0000250"/>
    <property type="project" value="UniProtKB"/>
</dbReference>
<dbReference type="GO" id="GO:0003682">
    <property type="term" value="F:chromatin binding"/>
    <property type="evidence" value="ECO:0000314"/>
    <property type="project" value="MGI"/>
</dbReference>
<dbReference type="GO" id="GO:1990841">
    <property type="term" value="F:promoter-specific chromatin binding"/>
    <property type="evidence" value="ECO:0000314"/>
    <property type="project" value="MGI"/>
</dbReference>
<dbReference type="GO" id="GO:0071535">
    <property type="term" value="F:RING-like zinc finger domain binding"/>
    <property type="evidence" value="ECO:0007669"/>
    <property type="project" value="Ensembl"/>
</dbReference>
<dbReference type="GO" id="GO:0097027">
    <property type="term" value="F:ubiquitin-protein transferase activator activity"/>
    <property type="evidence" value="ECO:0000314"/>
    <property type="project" value="MGI"/>
</dbReference>
<dbReference type="GO" id="GO:0008270">
    <property type="term" value="F:zinc ion binding"/>
    <property type="evidence" value="ECO:0000250"/>
    <property type="project" value="UniProtKB"/>
</dbReference>
<dbReference type="GO" id="GO:0097190">
    <property type="term" value="P:apoptotic signaling pathway"/>
    <property type="evidence" value="ECO:0000316"/>
    <property type="project" value="MGI"/>
</dbReference>
<dbReference type="GO" id="GO:0007420">
    <property type="term" value="P:brain development"/>
    <property type="evidence" value="ECO:0000315"/>
    <property type="project" value="MGI"/>
</dbReference>
<dbReference type="GO" id="GO:0071549">
    <property type="term" value="P:cellular response to dexamethasone stimulus"/>
    <property type="evidence" value="ECO:0007669"/>
    <property type="project" value="Ensembl"/>
</dbReference>
<dbReference type="GO" id="GO:0071347">
    <property type="term" value="P:cellular response to interleukin-1"/>
    <property type="evidence" value="ECO:0007669"/>
    <property type="project" value="Ensembl"/>
</dbReference>
<dbReference type="GO" id="GO:0006325">
    <property type="term" value="P:chromatin organization"/>
    <property type="evidence" value="ECO:0000314"/>
    <property type="project" value="MGI"/>
</dbReference>
<dbReference type="GO" id="GO:0006338">
    <property type="term" value="P:chromatin remodeling"/>
    <property type="evidence" value="ECO:0000250"/>
    <property type="project" value="UniProtKB"/>
</dbReference>
<dbReference type="GO" id="GO:0006346">
    <property type="term" value="P:DNA methylation-dependent constitutive heterochromatin formation"/>
    <property type="evidence" value="ECO:0000315"/>
    <property type="project" value="MGI"/>
</dbReference>
<dbReference type="GO" id="GO:0048706">
    <property type="term" value="P:embryonic skeletal system development"/>
    <property type="evidence" value="ECO:0000316"/>
    <property type="project" value="MGI"/>
</dbReference>
<dbReference type="GO" id="GO:0048704">
    <property type="term" value="P:embryonic skeletal system morphogenesis"/>
    <property type="evidence" value="ECO:0000316"/>
    <property type="project" value="MGI"/>
</dbReference>
<dbReference type="GO" id="GO:0061484">
    <property type="term" value="P:hematopoietic stem cell homeostasis"/>
    <property type="evidence" value="ECO:0000266"/>
    <property type="project" value="MGI"/>
</dbReference>
<dbReference type="GO" id="GO:0030097">
    <property type="term" value="P:hemopoiesis"/>
    <property type="evidence" value="ECO:0007669"/>
    <property type="project" value="Ensembl"/>
</dbReference>
<dbReference type="GO" id="GO:0006959">
    <property type="term" value="P:humoral immune response"/>
    <property type="evidence" value="ECO:0000315"/>
    <property type="project" value="MGI"/>
</dbReference>
<dbReference type="GO" id="GO:0001701">
    <property type="term" value="P:in utero embryonic development"/>
    <property type="evidence" value="ECO:0000316"/>
    <property type="project" value="MGI"/>
</dbReference>
<dbReference type="GO" id="GO:2001234">
    <property type="term" value="P:negative regulation of apoptotic signaling pathway"/>
    <property type="evidence" value="ECO:0000316"/>
    <property type="project" value="MGI"/>
</dbReference>
<dbReference type="GO" id="GO:0045814">
    <property type="term" value="P:negative regulation of gene expression, epigenetic"/>
    <property type="evidence" value="ECO:0000250"/>
    <property type="project" value="UniProtKB"/>
</dbReference>
<dbReference type="GO" id="GO:0000122">
    <property type="term" value="P:negative regulation of transcription by RNA polymerase II"/>
    <property type="evidence" value="ECO:0000314"/>
    <property type="project" value="MGI"/>
</dbReference>
<dbReference type="GO" id="GO:0030890">
    <property type="term" value="P:positive regulation of B cell proliferation"/>
    <property type="evidence" value="ECO:0000315"/>
    <property type="project" value="HGNC-UCL"/>
</dbReference>
<dbReference type="GO" id="GO:0048146">
    <property type="term" value="P:positive regulation of fibroblast proliferation"/>
    <property type="evidence" value="ECO:0007669"/>
    <property type="project" value="Ensembl"/>
</dbReference>
<dbReference type="GO" id="GO:0033092">
    <property type="term" value="P:positive regulation of immature T cell proliferation in thymus"/>
    <property type="evidence" value="ECO:0000315"/>
    <property type="project" value="HGNC-UCL"/>
</dbReference>
<dbReference type="GO" id="GO:0051443">
    <property type="term" value="P:positive regulation of ubiquitin-protein transferase activity"/>
    <property type="evidence" value="ECO:0000250"/>
    <property type="project" value="UniProtKB"/>
</dbReference>
<dbReference type="GO" id="GO:2000011">
    <property type="term" value="P:regulation of adaxial/abaxial pattern formation"/>
    <property type="evidence" value="ECO:0000316"/>
    <property type="project" value="MGI"/>
</dbReference>
<dbReference type="GO" id="GO:0090183">
    <property type="term" value="P:regulation of kidney development"/>
    <property type="evidence" value="ECO:0007669"/>
    <property type="project" value="Ensembl"/>
</dbReference>
<dbReference type="GO" id="GO:0021903">
    <property type="term" value="P:rostrocaudal neural tube patterning"/>
    <property type="evidence" value="ECO:0000315"/>
    <property type="project" value="MGI"/>
</dbReference>
<dbReference type="GO" id="GO:0001501">
    <property type="term" value="P:skeletal system development"/>
    <property type="evidence" value="ECO:0000315"/>
    <property type="project" value="MGI"/>
</dbReference>
<dbReference type="GO" id="GO:0048103">
    <property type="term" value="P:somatic stem cell division"/>
    <property type="evidence" value="ECO:0000315"/>
    <property type="project" value="MGI"/>
</dbReference>
<dbReference type="CDD" id="cd17165">
    <property type="entry name" value="RAWUL_PCGF4"/>
    <property type="match status" value="1"/>
</dbReference>
<dbReference type="CDD" id="cd16736">
    <property type="entry name" value="RING-HC_PCGF4"/>
    <property type="match status" value="1"/>
</dbReference>
<dbReference type="DisProt" id="DP01316"/>
<dbReference type="FunFam" id="3.10.20.90:FF:000106">
    <property type="entry name" value="Polycomb complex protein BMI-1"/>
    <property type="match status" value="1"/>
</dbReference>
<dbReference type="FunFam" id="3.30.40.10:FF:000082">
    <property type="entry name" value="Polycomb group ring finger 2"/>
    <property type="match status" value="1"/>
</dbReference>
<dbReference type="Gene3D" id="3.10.20.90">
    <property type="entry name" value="Phosphatidylinositol 3-kinase Catalytic Subunit, Chain A, domain 1"/>
    <property type="match status" value="1"/>
</dbReference>
<dbReference type="Gene3D" id="3.30.40.10">
    <property type="entry name" value="Zinc/RING finger domain, C3HC4 (zinc finger)"/>
    <property type="match status" value="1"/>
</dbReference>
<dbReference type="InterPro" id="IPR032443">
    <property type="entry name" value="RAWUL"/>
</dbReference>
<dbReference type="InterPro" id="IPR001841">
    <property type="entry name" value="Znf_RING"/>
</dbReference>
<dbReference type="InterPro" id="IPR013083">
    <property type="entry name" value="Znf_RING/FYVE/PHD"/>
</dbReference>
<dbReference type="InterPro" id="IPR017907">
    <property type="entry name" value="Znf_RING_CS"/>
</dbReference>
<dbReference type="PANTHER" id="PTHR10825:SF21">
    <property type="entry name" value="POLYCOMB COMPLEX PROTEIN BMI-1"/>
    <property type="match status" value="1"/>
</dbReference>
<dbReference type="PANTHER" id="PTHR10825">
    <property type="entry name" value="RING FINGER DOMAIN-CONTAINING, POLYCOMB GROUP COMPONENT"/>
    <property type="match status" value="1"/>
</dbReference>
<dbReference type="Pfam" id="PF16207">
    <property type="entry name" value="RAWUL"/>
    <property type="match status" value="1"/>
</dbReference>
<dbReference type="Pfam" id="PF13923">
    <property type="entry name" value="zf-C3HC4_2"/>
    <property type="match status" value="1"/>
</dbReference>
<dbReference type="SMART" id="SM00184">
    <property type="entry name" value="RING"/>
    <property type="match status" value="1"/>
</dbReference>
<dbReference type="SUPFAM" id="SSF57850">
    <property type="entry name" value="RING/U-box"/>
    <property type="match status" value="1"/>
</dbReference>
<dbReference type="PROSITE" id="PS00518">
    <property type="entry name" value="ZF_RING_1"/>
    <property type="match status" value="1"/>
</dbReference>
<dbReference type="PROSITE" id="PS50089">
    <property type="entry name" value="ZF_RING_2"/>
    <property type="match status" value="1"/>
</dbReference>
<evidence type="ECO:0000250" key="1"/>
<evidence type="ECO:0000250" key="2">
    <source>
        <dbReference type="UniProtKB" id="P35226"/>
    </source>
</evidence>
<evidence type="ECO:0000255" key="3"/>
<evidence type="ECO:0000255" key="4">
    <source>
        <dbReference type="PROSITE-ProRule" id="PRU00175"/>
    </source>
</evidence>
<evidence type="ECO:0000256" key="5">
    <source>
        <dbReference type="SAM" id="MobiDB-lite"/>
    </source>
</evidence>
<evidence type="ECO:0000269" key="6">
    <source>
    </source>
</evidence>
<evidence type="ECO:0000269" key="7">
    <source>
    </source>
</evidence>
<evidence type="ECO:0000269" key="8">
    <source>
    </source>
</evidence>
<evidence type="ECO:0000305" key="9"/>
<evidence type="ECO:0007829" key="10">
    <source>
        <dbReference type="PDB" id="2CKL"/>
    </source>
</evidence>
<protein>
    <recommendedName>
        <fullName>Polycomb complex protein BMI-1</fullName>
    </recommendedName>
    <alternativeName>
        <fullName>Polycomb group RING finger protein 4</fullName>
    </alternativeName>
</protein>